<reference key="1">
    <citation type="journal article" date="2002" name="Nature">
        <title>Comparison of the genomes of two Xanthomonas pathogens with differing host specificities.</title>
        <authorList>
            <person name="da Silva A.C.R."/>
            <person name="Ferro J.A."/>
            <person name="Reinach F.C."/>
            <person name="Farah C.S."/>
            <person name="Furlan L.R."/>
            <person name="Quaggio R.B."/>
            <person name="Monteiro-Vitorello C.B."/>
            <person name="Van Sluys M.A."/>
            <person name="Almeida N.F. Jr."/>
            <person name="Alves L.M.C."/>
            <person name="do Amaral A.M."/>
            <person name="Bertolini M.C."/>
            <person name="Camargo L.E.A."/>
            <person name="Camarotte G."/>
            <person name="Cannavan F."/>
            <person name="Cardozo J."/>
            <person name="Chambergo F."/>
            <person name="Ciapina L.P."/>
            <person name="Cicarelli R.M.B."/>
            <person name="Coutinho L.L."/>
            <person name="Cursino-Santos J.R."/>
            <person name="El-Dorry H."/>
            <person name="Faria J.B."/>
            <person name="Ferreira A.J.S."/>
            <person name="Ferreira R.C.C."/>
            <person name="Ferro M.I.T."/>
            <person name="Formighieri E.F."/>
            <person name="Franco M.C."/>
            <person name="Greggio C.C."/>
            <person name="Gruber A."/>
            <person name="Katsuyama A.M."/>
            <person name="Kishi L.T."/>
            <person name="Leite R.P."/>
            <person name="Lemos E.G.M."/>
            <person name="Lemos M.V.F."/>
            <person name="Locali E.C."/>
            <person name="Machado M.A."/>
            <person name="Madeira A.M.B.N."/>
            <person name="Martinez-Rossi N.M."/>
            <person name="Martins E.C."/>
            <person name="Meidanis J."/>
            <person name="Menck C.F.M."/>
            <person name="Miyaki C.Y."/>
            <person name="Moon D.H."/>
            <person name="Moreira L.M."/>
            <person name="Novo M.T.M."/>
            <person name="Okura V.K."/>
            <person name="Oliveira M.C."/>
            <person name="Oliveira V.R."/>
            <person name="Pereira H.A."/>
            <person name="Rossi A."/>
            <person name="Sena J.A.D."/>
            <person name="Silva C."/>
            <person name="de Souza R.F."/>
            <person name="Spinola L.A.F."/>
            <person name="Takita M.A."/>
            <person name="Tamura R.E."/>
            <person name="Teixeira E.C."/>
            <person name="Tezza R.I.D."/>
            <person name="Trindade dos Santos M."/>
            <person name="Truffi D."/>
            <person name="Tsai S.M."/>
            <person name="White F.F."/>
            <person name="Setubal J.C."/>
            <person name="Kitajima J.P."/>
        </authorList>
    </citation>
    <scope>NUCLEOTIDE SEQUENCE [LARGE SCALE GENOMIC DNA]</scope>
    <source>
        <strain>306</strain>
    </source>
</reference>
<keyword id="KW-0686">Riboflavin biosynthesis</keyword>
<keyword id="KW-0808">Transferase</keyword>
<proteinExistence type="inferred from homology"/>
<dbReference type="EC" id="2.5.1.78" evidence="1"/>
<dbReference type="EMBL" id="AE008923">
    <property type="protein sequence ID" value="AAM35639.1"/>
    <property type="molecule type" value="Genomic_DNA"/>
</dbReference>
<dbReference type="RefSeq" id="WP_003490334.1">
    <property type="nucleotide sequence ID" value="NC_003919.1"/>
</dbReference>
<dbReference type="SMR" id="Q8PPD6"/>
<dbReference type="GeneID" id="97509135"/>
<dbReference type="KEGG" id="xac:XAC0750"/>
<dbReference type="eggNOG" id="COG0054">
    <property type="taxonomic scope" value="Bacteria"/>
</dbReference>
<dbReference type="HOGENOM" id="CLU_089358_1_2_6"/>
<dbReference type="BRENDA" id="2.5.1.78">
    <property type="organism ID" value="6710"/>
</dbReference>
<dbReference type="UniPathway" id="UPA00275">
    <property type="reaction ID" value="UER00404"/>
</dbReference>
<dbReference type="Proteomes" id="UP000000576">
    <property type="component" value="Chromosome"/>
</dbReference>
<dbReference type="GO" id="GO:0005829">
    <property type="term" value="C:cytosol"/>
    <property type="evidence" value="ECO:0007669"/>
    <property type="project" value="TreeGrafter"/>
</dbReference>
<dbReference type="GO" id="GO:0009349">
    <property type="term" value="C:riboflavin synthase complex"/>
    <property type="evidence" value="ECO:0007669"/>
    <property type="project" value="InterPro"/>
</dbReference>
<dbReference type="GO" id="GO:0000906">
    <property type="term" value="F:6,7-dimethyl-8-ribityllumazine synthase activity"/>
    <property type="evidence" value="ECO:0007669"/>
    <property type="project" value="UniProtKB-UniRule"/>
</dbReference>
<dbReference type="GO" id="GO:0009231">
    <property type="term" value="P:riboflavin biosynthetic process"/>
    <property type="evidence" value="ECO:0007669"/>
    <property type="project" value="UniProtKB-UniRule"/>
</dbReference>
<dbReference type="CDD" id="cd09209">
    <property type="entry name" value="Lumazine_synthase-I"/>
    <property type="match status" value="1"/>
</dbReference>
<dbReference type="FunFam" id="3.40.50.960:FF:000004">
    <property type="entry name" value="6,7-dimethyl-8-ribityllumazine synthase"/>
    <property type="match status" value="1"/>
</dbReference>
<dbReference type="Gene3D" id="3.40.50.960">
    <property type="entry name" value="Lumazine/riboflavin synthase"/>
    <property type="match status" value="1"/>
</dbReference>
<dbReference type="HAMAP" id="MF_00178">
    <property type="entry name" value="Lumazine_synth"/>
    <property type="match status" value="1"/>
</dbReference>
<dbReference type="InterPro" id="IPR034964">
    <property type="entry name" value="LS"/>
</dbReference>
<dbReference type="InterPro" id="IPR002180">
    <property type="entry name" value="LS/RS"/>
</dbReference>
<dbReference type="InterPro" id="IPR036467">
    <property type="entry name" value="LS/RS_sf"/>
</dbReference>
<dbReference type="NCBIfam" id="TIGR00114">
    <property type="entry name" value="lumazine-synth"/>
    <property type="match status" value="1"/>
</dbReference>
<dbReference type="PANTHER" id="PTHR21058:SF0">
    <property type="entry name" value="6,7-DIMETHYL-8-RIBITYLLUMAZINE SYNTHASE"/>
    <property type="match status" value="1"/>
</dbReference>
<dbReference type="PANTHER" id="PTHR21058">
    <property type="entry name" value="6,7-DIMETHYL-8-RIBITYLLUMAZINE SYNTHASE DMRL SYNTHASE LUMAZINE SYNTHASE"/>
    <property type="match status" value="1"/>
</dbReference>
<dbReference type="Pfam" id="PF00885">
    <property type="entry name" value="DMRL_synthase"/>
    <property type="match status" value="1"/>
</dbReference>
<dbReference type="SUPFAM" id="SSF52121">
    <property type="entry name" value="Lumazine synthase"/>
    <property type="match status" value="1"/>
</dbReference>
<name>RISB_XANAC</name>
<protein>
    <recommendedName>
        <fullName evidence="1">6,7-dimethyl-8-ribityllumazine synthase</fullName>
        <shortName evidence="1">DMRL synthase</shortName>
        <shortName evidence="1">LS</shortName>
        <shortName evidence="1">Lumazine synthase</shortName>
        <ecNumber evidence="1">2.5.1.78</ecNumber>
    </recommendedName>
</protein>
<feature type="chain" id="PRO_0000134834" description="6,7-dimethyl-8-ribityllumazine synthase">
    <location>
        <begin position="1"/>
        <end position="154"/>
    </location>
</feature>
<feature type="active site" description="Proton donor" evidence="1">
    <location>
        <position position="88"/>
    </location>
</feature>
<feature type="binding site" evidence="1">
    <location>
        <position position="22"/>
    </location>
    <ligand>
        <name>5-amino-6-(D-ribitylamino)uracil</name>
        <dbReference type="ChEBI" id="CHEBI:15934"/>
    </ligand>
</feature>
<feature type="binding site" evidence="1">
    <location>
        <begin position="56"/>
        <end position="58"/>
    </location>
    <ligand>
        <name>5-amino-6-(D-ribitylamino)uracil</name>
        <dbReference type="ChEBI" id="CHEBI:15934"/>
    </ligand>
</feature>
<feature type="binding site" evidence="1">
    <location>
        <begin position="80"/>
        <end position="82"/>
    </location>
    <ligand>
        <name>5-amino-6-(D-ribitylamino)uracil</name>
        <dbReference type="ChEBI" id="CHEBI:15934"/>
    </ligand>
</feature>
<feature type="binding site" evidence="1">
    <location>
        <begin position="85"/>
        <end position="86"/>
    </location>
    <ligand>
        <name>(2S)-2-hydroxy-3-oxobutyl phosphate</name>
        <dbReference type="ChEBI" id="CHEBI:58830"/>
    </ligand>
</feature>
<feature type="binding site" evidence="1">
    <location>
        <position position="113"/>
    </location>
    <ligand>
        <name>5-amino-6-(D-ribitylamino)uracil</name>
        <dbReference type="ChEBI" id="CHEBI:15934"/>
    </ligand>
</feature>
<feature type="binding site" evidence="1">
    <location>
        <position position="127"/>
    </location>
    <ligand>
        <name>(2S)-2-hydroxy-3-oxobutyl phosphate</name>
        <dbReference type="ChEBI" id="CHEBI:58830"/>
    </ligand>
</feature>
<comment type="function">
    <text evidence="1">Catalyzes the formation of 6,7-dimethyl-8-ribityllumazine by condensation of 5-amino-6-(D-ribitylamino)uracil with 3,4-dihydroxy-2-butanone 4-phosphate. This is the penultimate step in the biosynthesis of riboflavin.</text>
</comment>
<comment type="catalytic activity">
    <reaction evidence="1">
        <text>(2S)-2-hydroxy-3-oxobutyl phosphate + 5-amino-6-(D-ribitylamino)uracil = 6,7-dimethyl-8-(1-D-ribityl)lumazine + phosphate + 2 H2O + H(+)</text>
        <dbReference type="Rhea" id="RHEA:26152"/>
        <dbReference type="ChEBI" id="CHEBI:15377"/>
        <dbReference type="ChEBI" id="CHEBI:15378"/>
        <dbReference type="ChEBI" id="CHEBI:15934"/>
        <dbReference type="ChEBI" id="CHEBI:43474"/>
        <dbReference type="ChEBI" id="CHEBI:58201"/>
        <dbReference type="ChEBI" id="CHEBI:58830"/>
        <dbReference type="EC" id="2.5.1.78"/>
    </reaction>
</comment>
<comment type="pathway">
    <text evidence="1">Cofactor biosynthesis; riboflavin biosynthesis; riboflavin from 2-hydroxy-3-oxobutyl phosphate and 5-amino-6-(D-ribitylamino)uracil: step 1/2.</text>
</comment>
<comment type="subunit">
    <text evidence="1">Forms an icosahedral capsid composed of 60 subunits, arranged as a dodecamer of pentamers.</text>
</comment>
<comment type="similarity">
    <text evidence="1">Belongs to the DMRL synthase family.</text>
</comment>
<sequence length="154" mass="16241">MTHYEGDLRPTTARFAIIASRWNARITDVLVAGARQSLAGNGIGEDAIDVIRVPGAWEIPIAANRVAQSGQHGAIIALGCVIRGDTRHYEHVADLCAEGLMSVQLQTGVPVLNGVLAVERVEDAEARAGGSHGNKGEECALAALELVNLMELLP</sequence>
<accession>Q8PPD6</accession>
<organism>
    <name type="scientific">Xanthomonas axonopodis pv. citri (strain 306)</name>
    <dbReference type="NCBI Taxonomy" id="190486"/>
    <lineage>
        <taxon>Bacteria</taxon>
        <taxon>Pseudomonadati</taxon>
        <taxon>Pseudomonadota</taxon>
        <taxon>Gammaproteobacteria</taxon>
        <taxon>Lysobacterales</taxon>
        <taxon>Lysobacteraceae</taxon>
        <taxon>Xanthomonas</taxon>
    </lineage>
</organism>
<evidence type="ECO:0000255" key="1">
    <source>
        <dbReference type="HAMAP-Rule" id="MF_00178"/>
    </source>
</evidence>
<gene>
    <name evidence="1" type="primary">ribH</name>
    <name type="ordered locus">XAC0750</name>
</gene>